<keyword id="KW-0472">Membrane</keyword>
<keyword id="KW-0812">Transmembrane</keyword>
<keyword id="KW-1133">Transmembrane helix</keyword>
<keyword id="KW-0813">Transport</keyword>
<reference key="1">
    <citation type="journal article" date="1995" name="Proc. Natl. Acad. Sci. U.S.A.">
        <title>Plant members of a family of sulfate transporters reveal functional subtypes.</title>
        <authorList>
            <person name="Smith F.W."/>
            <person name="Ealing P.M."/>
            <person name="Hawkesford M.J."/>
            <person name="Clarkson D.T."/>
        </authorList>
    </citation>
    <scope>NUCLEOTIDE SEQUENCE [MRNA]</scope>
    <source>
        <strain>cv. Verano</strain>
        <tissue>Root</tissue>
    </source>
</reference>
<accession>P53391</accession>
<evidence type="ECO:0000255" key="1"/>
<evidence type="ECO:0000255" key="2">
    <source>
        <dbReference type="PROSITE-ProRule" id="PRU00198"/>
    </source>
</evidence>
<evidence type="ECO:0000256" key="3">
    <source>
        <dbReference type="SAM" id="MobiDB-lite"/>
    </source>
</evidence>
<evidence type="ECO:0000305" key="4"/>
<dbReference type="EMBL" id="X82255">
    <property type="protein sequence ID" value="CAA57710.1"/>
    <property type="molecule type" value="mRNA"/>
</dbReference>
<dbReference type="PIR" id="S51763">
    <property type="entry name" value="S51763"/>
</dbReference>
<dbReference type="SMR" id="P53391"/>
<dbReference type="TCDB" id="2.A.53.1.3">
    <property type="family name" value="the sulfate permease (sulp) family"/>
</dbReference>
<dbReference type="GO" id="GO:0016020">
    <property type="term" value="C:membrane"/>
    <property type="evidence" value="ECO:0007669"/>
    <property type="project" value="UniProtKB-SubCell"/>
</dbReference>
<dbReference type="GO" id="GO:0008271">
    <property type="term" value="F:secondary active sulfate transmembrane transporter activity"/>
    <property type="evidence" value="ECO:0007669"/>
    <property type="project" value="InterPro"/>
</dbReference>
<dbReference type="CDD" id="cd07042">
    <property type="entry name" value="STAS_SulP_like_sulfate_transporter"/>
    <property type="match status" value="1"/>
</dbReference>
<dbReference type="FunFam" id="3.30.750.24:FF:000002">
    <property type="entry name" value="Sulfate transporter 31"/>
    <property type="match status" value="1"/>
</dbReference>
<dbReference type="Gene3D" id="3.30.750.24">
    <property type="entry name" value="STAS domain"/>
    <property type="match status" value="1"/>
</dbReference>
<dbReference type="InterPro" id="IPR018045">
    <property type="entry name" value="S04_transporter_CS"/>
</dbReference>
<dbReference type="InterPro" id="IPR011547">
    <property type="entry name" value="SLC26A/SulP_dom"/>
</dbReference>
<dbReference type="InterPro" id="IPR001902">
    <property type="entry name" value="SLC26A/SulP_fam"/>
</dbReference>
<dbReference type="InterPro" id="IPR002645">
    <property type="entry name" value="STAS_dom"/>
</dbReference>
<dbReference type="InterPro" id="IPR036513">
    <property type="entry name" value="STAS_dom_sf"/>
</dbReference>
<dbReference type="NCBIfam" id="TIGR00815">
    <property type="entry name" value="sulP"/>
    <property type="match status" value="1"/>
</dbReference>
<dbReference type="PANTHER" id="PTHR11814">
    <property type="entry name" value="SULFATE TRANSPORTER"/>
    <property type="match status" value="1"/>
</dbReference>
<dbReference type="Pfam" id="PF01740">
    <property type="entry name" value="STAS"/>
    <property type="match status" value="1"/>
</dbReference>
<dbReference type="Pfam" id="PF00916">
    <property type="entry name" value="Sulfate_transp"/>
    <property type="match status" value="1"/>
</dbReference>
<dbReference type="SUPFAM" id="SSF52091">
    <property type="entry name" value="SpoIIaa-like"/>
    <property type="match status" value="1"/>
</dbReference>
<dbReference type="PROSITE" id="PS01130">
    <property type="entry name" value="SLC26A"/>
    <property type="match status" value="1"/>
</dbReference>
<dbReference type="PROSITE" id="PS50801">
    <property type="entry name" value="STAS"/>
    <property type="match status" value="1"/>
</dbReference>
<feature type="chain" id="PRO_0000080189" description="High affinity sulfate transporter 1">
    <location>
        <begin position="1"/>
        <end position="667"/>
    </location>
</feature>
<feature type="transmembrane region" description="Helical" evidence="1">
    <location>
        <begin position="106"/>
        <end position="126"/>
    </location>
</feature>
<feature type="transmembrane region" description="Helical" evidence="1">
    <location>
        <begin position="131"/>
        <end position="151"/>
    </location>
</feature>
<feature type="transmembrane region" description="Helical" evidence="1">
    <location>
        <begin position="156"/>
        <end position="176"/>
    </location>
</feature>
<feature type="transmembrane region" description="Helical" evidence="1">
    <location>
        <begin position="185"/>
        <end position="205"/>
    </location>
</feature>
<feature type="transmembrane region" description="Helical" evidence="1">
    <location>
        <begin position="208"/>
        <end position="228"/>
    </location>
</feature>
<feature type="transmembrane region" description="Helical" evidence="1">
    <location>
        <begin position="269"/>
        <end position="289"/>
    </location>
</feature>
<feature type="transmembrane region" description="Helical" evidence="1">
    <location>
        <begin position="296"/>
        <end position="316"/>
    </location>
</feature>
<feature type="transmembrane region" description="Helical" evidence="1">
    <location>
        <begin position="350"/>
        <end position="370"/>
    </location>
</feature>
<feature type="transmembrane region" description="Helical" evidence="1">
    <location>
        <begin position="425"/>
        <end position="445"/>
    </location>
</feature>
<feature type="transmembrane region" description="Helical" evidence="1">
    <location>
        <begin position="452"/>
        <end position="472"/>
    </location>
</feature>
<feature type="transmembrane region" description="Helical" evidence="1">
    <location>
        <begin position="486"/>
        <end position="506"/>
    </location>
</feature>
<feature type="domain" description="STAS" evidence="2">
    <location>
        <begin position="537"/>
        <end position="660"/>
    </location>
</feature>
<feature type="region of interest" description="Disordered" evidence="3">
    <location>
        <begin position="16"/>
        <end position="38"/>
    </location>
</feature>
<comment type="function">
    <text>High-affinity H(+)/sulfate cotransporter that mediates the uptake of sulfate by plant roots from low concentrations of sulfate in the soil solution.</text>
</comment>
<comment type="subcellular location">
    <subcellularLocation>
        <location evidence="4">Membrane</location>
        <topology evidence="4">Multi-pass membrane protein</topology>
    </subcellularLocation>
</comment>
<comment type="similarity">
    <text evidence="4">Belongs to the SLC26A/SulP transporter (TC 2.A.53) family.</text>
</comment>
<sequence length="667" mass="73173">MSQRVSDQVMADVIAETRSNSSSHRHGGGGGGDDTTSLPYMHKVGTPPKQTLFQEIKHSFNETFFPDKPFGKFKDQSGFRKLELGLQYIFPILEWGRHYDLKKFRGDFIAGLTIASLCIPQDLAYAKLANLDPWYGLYSSFVAPLVYAFMGTSRDIAIGPVAVVSLLLGTLLSNEISNTKSHDYLRLAFTATFFAGVTQMLLGVCRLGFLIDFLSHAAIVGFMAGAAITIGLQQLKGLLGISNNNFTKKTDIISVMRSVWTHVHHGWNWETILIGLSFLIFLLITKYIAKKNKKLFWVSAISPMISVIVSTFFVYITRADKRGVSIVKHIKSGVNPSSANEIFFHGKYLGAGVRVGVVAGLVALTEAIAIGRTFAAMKDYALDGNKEMVAMGTMNIVGSLSSCYVTTGSFSRSAVNYMAGCKTAVSNIVMSIVVLLTLLVITPLFKYTPNAVLASIIIAAVVNLVNIEAMVLLWKIDKFDFVACMGAFFGVIFKSVEIGLLIAVAISFAKILLQVTRPRTAVLGKLPGTSVYRNIQQYPKAAQIPGMLIIRVDSAIYFSNSNYIKERILRWLIDEGAQRTESELPEIQHLITEMSPVPDIDTSGIHAFEELYKTLQKREVQLILANPGPVVIEKLHASKLTELIGEDKIFLTVADAVATYGPKTAAF</sequence>
<protein>
    <recommendedName>
        <fullName>High affinity sulfate transporter 1</fullName>
    </recommendedName>
</protein>
<gene>
    <name type="primary">ST1</name>
</gene>
<name>SUT1_STYHA</name>
<organism>
    <name type="scientific">Stylosanthes hamata</name>
    <name type="common">Caribbean stylo</name>
    <dbReference type="NCBI Taxonomy" id="37660"/>
    <lineage>
        <taxon>Eukaryota</taxon>
        <taxon>Viridiplantae</taxon>
        <taxon>Streptophyta</taxon>
        <taxon>Embryophyta</taxon>
        <taxon>Tracheophyta</taxon>
        <taxon>Spermatophyta</taxon>
        <taxon>Magnoliopsida</taxon>
        <taxon>eudicotyledons</taxon>
        <taxon>Gunneridae</taxon>
        <taxon>Pentapetalae</taxon>
        <taxon>rosids</taxon>
        <taxon>fabids</taxon>
        <taxon>Fabales</taxon>
        <taxon>Fabaceae</taxon>
        <taxon>Papilionoideae</taxon>
        <taxon>50 kb inversion clade</taxon>
        <taxon>dalbergioids sensu lato</taxon>
        <taxon>Dalbergieae</taxon>
        <taxon>Pterocarpus clade</taxon>
        <taxon>Stylosanthes</taxon>
    </lineage>
</organism>
<proteinExistence type="evidence at transcript level"/>